<name>UAP1_DICDI</name>
<sequence length="487" mass="55431">MDTTNFEDIRNEWIEQGQGHVFNWFDKLSNEEKLNFENDIRKINVKEVNKDYKNVLLNKDEQKIMKYEHFENVMTLNKIKEQDKKKWEDIGYELISKGEVAVLLLAGGQATRLGTTFPKGFYDVGLPSKKSLFQLQAERIYRLQQLVSERYNGSYDQDSKPIQWYIMTSEATHSETIKFFENKNYFGLKKSAFFFFSQAMIPCITPEDGKIISESGSKLSLSPNGNGGLFKALSTSGAIDDMRKKGIKYVTQYCVDNILINMADPVFVGYMHDQSADCGAKVVSKSDPKEPVGVMALNGDGKPFVLEYSEIDEQSKFKKDQNGQLVFNYAHICINAFSFDFLDRIAKNHLDHLKYHVAFKKIPSAHPISGERQSPSSPNGWKLEKFIFDVFPFSKKMVCLEIERSKEFSPLKNCGGMNLPDSPETCLRDISNLHKSFIENSGGKIDSSNSTICEVSPLVSLNGENLKNFVNDKTFILPIEINQNLNN</sequence>
<proteinExistence type="inferred from homology"/>
<gene>
    <name type="primary">uap1</name>
    <name type="ORF">DDB_G0290055</name>
</gene>
<dbReference type="EC" id="2.7.7.23"/>
<dbReference type="EMBL" id="AAFI02000151">
    <property type="protein sequence ID" value="EAL62433.1"/>
    <property type="molecule type" value="Genomic_DNA"/>
</dbReference>
<dbReference type="RefSeq" id="XP_635927.1">
    <property type="nucleotide sequence ID" value="XM_630835.1"/>
</dbReference>
<dbReference type="SMR" id="Q54GN5"/>
<dbReference type="FunCoup" id="Q54GN5">
    <property type="interactions" value="565"/>
</dbReference>
<dbReference type="STRING" id="44689.Q54GN5"/>
<dbReference type="PaxDb" id="44689-DDB0266385"/>
<dbReference type="EnsemblProtists" id="EAL62433">
    <property type="protein sequence ID" value="EAL62433"/>
    <property type="gene ID" value="DDB_G0290055"/>
</dbReference>
<dbReference type="GeneID" id="8627448"/>
<dbReference type="KEGG" id="ddi:DDB_G0290055"/>
<dbReference type="dictyBase" id="DDB_G0290055">
    <property type="gene designation" value="uap1"/>
</dbReference>
<dbReference type="VEuPathDB" id="AmoebaDB:DDB_G0290055"/>
<dbReference type="eggNOG" id="KOG2388">
    <property type="taxonomic scope" value="Eukaryota"/>
</dbReference>
<dbReference type="HOGENOM" id="CLU_025603_1_2_1"/>
<dbReference type="InParanoid" id="Q54GN5"/>
<dbReference type="OMA" id="YFQVDNP"/>
<dbReference type="PhylomeDB" id="Q54GN5"/>
<dbReference type="Reactome" id="R-DDI-446210">
    <property type="pathway name" value="Synthesis of UDP-N-acetyl-glucosamine"/>
</dbReference>
<dbReference type="UniPathway" id="UPA00113">
    <property type="reaction ID" value="UER00533"/>
</dbReference>
<dbReference type="PRO" id="PR:Q54GN5"/>
<dbReference type="Proteomes" id="UP000002195">
    <property type="component" value="Chromosome 5"/>
</dbReference>
<dbReference type="GO" id="GO:0005737">
    <property type="term" value="C:cytoplasm"/>
    <property type="evidence" value="ECO:0007669"/>
    <property type="project" value="UniProtKB-SubCell"/>
</dbReference>
<dbReference type="GO" id="GO:0003977">
    <property type="term" value="F:UDP-N-acetylglucosamine diphosphorylase activity"/>
    <property type="evidence" value="ECO:0000318"/>
    <property type="project" value="GO_Central"/>
</dbReference>
<dbReference type="GO" id="GO:0006048">
    <property type="term" value="P:UDP-N-acetylglucosamine biosynthetic process"/>
    <property type="evidence" value="ECO:0000318"/>
    <property type="project" value="GO_Central"/>
</dbReference>
<dbReference type="CDD" id="cd04193">
    <property type="entry name" value="UDPGlcNAc_PPase"/>
    <property type="match status" value="1"/>
</dbReference>
<dbReference type="FunFam" id="3.90.550.10:FF:000444">
    <property type="entry name" value="Probable UDP-N-acetylglucosamine pyrophosphorylase"/>
    <property type="match status" value="1"/>
</dbReference>
<dbReference type="Gene3D" id="3.90.550.10">
    <property type="entry name" value="Spore Coat Polysaccharide Biosynthesis Protein SpsA, Chain A"/>
    <property type="match status" value="1"/>
</dbReference>
<dbReference type="InterPro" id="IPR029044">
    <property type="entry name" value="Nucleotide-diphossugar_trans"/>
</dbReference>
<dbReference type="InterPro" id="IPR039741">
    <property type="entry name" value="UDP-sugar_pyrophosphorylase"/>
</dbReference>
<dbReference type="InterPro" id="IPR002618">
    <property type="entry name" value="UDPGP_fam"/>
</dbReference>
<dbReference type="PANTHER" id="PTHR11952:SF2">
    <property type="entry name" value="LD24639P"/>
    <property type="match status" value="1"/>
</dbReference>
<dbReference type="PANTHER" id="PTHR11952">
    <property type="entry name" value="UDP- GLUCOSE PYROPHOSPHORYLASE"/>
    <property type="match status" value="1"/>
</dbReference>
<dbReference type="Pfam" id="PF01704">
    <property type="entry name" value="UDPGP"/>
    <property type="match status" value="1"/>
</dbReference>
<dbReference type="SUPFAM" id="SSF53448">
    <property type="entry name" value="Nucleotide-diphospho-sugar transferases"/>
    <property type="match status" value="1"/>
</dbReference>
<accession>Q54GN5</accession>
<evidence type="ECO:0000250" key="1"/>
<evidence type="ECO:0000250" key="2">
    <source>
        <dbReference type="UniProtKB" id="Q9M9P3"/>
    </source>
</evidence>
<evidence type="ECO:0000305" key="3"/>
<reference key="1">
    <citation type="journal article" date="2005" name="Nature">
        <title>The genome of the social amoeba Dictyostelium discoideum.</title>
        <authorList>
            <person name="Eichinger L."/>
            <person name="Pachebat J.A."/>
            <person name="Gloeckner G."/>
            <person name="Rajandream M.A."/>
            <person name="Sucgang R."/>
            <person name="Berriman M."/>
            <person name="Song J."/>
            <person name="Olsen R."/>
            <person name="Szafranski K."/>
            <person name="Xu Q."/>
            <person name="Tunggal B."/>
            <person name="Kummerfeld S."/>
            <person name="Madera M."/>
            <person name="Konfortov B.A."/>
            <person name="Rivero F."/>
            <person name="Bankier A.T."/>
            <person name="Lehmann R."/>
            <person name="Hamlin N."/>
            <person name="Davies R."/>
            <person name="Gaudet P."/>
            <person name="Fey P."/>
            <person name="Pilcher K."/>
            <person name="Chen G."/>
            <person name="Saunders D."/>
            <person name="Sodergren E.J."/>
            <person name="Davis P."/>
            <person name="Kerhornou A."/>
            <person name="Nie X."/>
            <person name="Hall N."/>
            <person name="Anjard C."/>
            <person name="Hemphill L."/>
            <person name="Bason N."/>
            <person name="Farbrother P."/>
            <person name="Desany B."/>
            <person name="Just E."/>
            <person name="Morio T."/>
            <person name="Rost R."/>
            <person name="Churcher C.M."/>
            <person name="Cooper J."/>
            <person name="Haydock S."/>
            <person name="van Driessche N."/>
            <person name="Cronin A."/>
            <person name="Goodhead I."/>
            <person name="Muzny D.M."/>
            <person name="Mourier T."/>
            <person name="Pain A."/>
            <person name="Lu M."/>
            <person name="Harper D."/>
            <person name="Lindsay R."/>
            <person name="Hauser H."/>
            <person name="James K.D."/>
            <person name="Quiles M."/>
            <person name="Madan Babu M."/>
            <person name="Saito T."/>
            <person name="Buchrieser C."/>
            <person name="Wardroper A."/>
            <person name="Felder M."/>
            <person name="Thangavelu M."/>
            <person name="Johnson D."/>
            <person name="Knights A."/>
            <person name="Loulseged H."/>
            <person name="Mungall K.L."/>
            <person name="Oliver K."/>
            <person name="Price C."/>
            <person name="Quail M.A."/>
            <person name="Urushihara H."/>
            <person name="Hernandez J."/>
            <person name="Rabbinowitsch E."/>
            <person name="Steffen D."/>
            <person name="Sanders M."/>
            <person name="Ma J."/>
            <person name="Kohara Y."/>
            <person name="Sharp S."/>
            <person name="Simmonds M.N."/>
            <person name="Spiegler S."/>
            <person name="Tivey A."/>
            <person name="Sugano S."/>
            <person name="White B."/>
            <person name="Walker D."/>
            <person name="Woodward J.R."/>
            <person name="Winckler T."/>
            <person name="Tanaka Y."/>
            <person name="Shaulsky G."/>
            <person name="Schleicher M."/>
            <person name="Weinstock G.M."/>
            <person name="Rosenthal A."/>
            <person name="Cox E.C."/>
            <person name="Chisholm R.L."/>
            <person name="Gibbs R.A."/>
            <person name="Loomis W.F."/>
            <person name="Platzer M."/>
            <person name="Kay R.R."/>
            <person name="Williams J.G."/>
            <person name="Dear P.H."/>
            <person name="Noegel A.A."/>
            <person name="Barrell B.G."/>
            <person name="Kuspa A."/>
        </authorList>
    </citation>
    <scope>NUCLEOTIDE SEQUENCE [LARGE SCALE GENOMIC DNA]</scope>
    <source>
        <strain>AX4</strain>
    </source>
</reference>
<protein>
    <recommendedName>
        <fullName>Probable UDP-N-acetylglucosamine pyrophosphorylase</fullName>
        <ecNumber>2.7.7.23</ecNumber>
    </recommendedName>
</protein>
<comment type="catalytic activity">
    <reaction>
        <text>N-acetyl-alpha-D-glucosamine 1-phosphate + UTP + H(+) = UDP-N-acetyl-alpha-D-glucosamine + diphosphate</text>
        <dbReference type="Rhea" id="RHEA:13509"/>
        <dbReference type="ChEBI" id="CHEBI:15378"/>
        <dbReference type="ChEBI" id="CHEBI:33019"/>
        <dbReference type="ChEBI" id="CHEBI:46398"/>
        <dbReference type="ChEBI" id="CHEBI:57705"/>
        <dbReference type="ChEBI" id="CHEBI:57776"/>
        <dbReference type="EC" id="2.7.7.23"/>
    </reaction>
</comment>
<comment type="pathway">
    <text>Nucleotide-sugar biosynthesis; UDP-N-acetyl-alpha-D-glucosamine biosynthesis; UDP-N-acetyl-alpha-D-glucosamine from N-acetyl-alpha-D-glucosamine 1-phosphate: step 1/1.</text>
</comment>
<comment type="subcellular location">
    <subcellularLocation>
        <location evidence="1">Cytoplasm</location>
    </subcellularLocation>
</comment>
<comment type="similarity">
    <text evidence="3">Belongs to the UDPGP type 1 family.</text>
</comment>
<keyword id="KW-0963">Cytoplasm</keyword>
<keyword id="KW-0548">Nucleotidyltransferase</keyword>
<keyword id="KW-1185">Reference proteome</keyword>
<keyword id="KW-0808">Transferase</keyword>
<feature type="chain" id="PRO_0000328000" description="Probable UDP-N-acetylglucosamine pyrophosphorylase">
    <location>
        <begin position="1"/>
        <end position="487"/>
    </location>
</feature>
<feature type="short sequence motif" description="Substrate binding" evidence="1">
    <location>
        <begin position="105"/>
        <end position="108"/>
    </location>
</feature>
<feature type="short sequence motif" description="Substrate binding" evidence="1">
    <location>
        <begin position="307"/>
        <end position="308"/>
    </location>
</feature>
<feature type="binding site" evidence="2">
    <location>
        <begin position="105"/>
        <end position="108"/>
    </location>
    <ligand>
        <name>UTP</name>
        <dbReference type="ChEBI" id="CHEBI:46398"/>
    </ligand>
</feature>
<feature type="binding site" evidence="2">
    <location>
        <position position="119"/>
    </location>
    <ligand>
        <name>UTP</name>
        <dbReference type="ChEBI" id="CHEBI:46398"/>
    </ligand>
</feature>
<feature type="binding site" evidence="2">
    <location>
        <position position="198"/>
    </location>
    <ligand>
        <name>UTP</name>
        <dbReference type="ChEBI" id="CHEBI:46398"/>
    </ligand>
</feature>
<feature type="binding site" evidence="2">
    <location>
        <position position="225"/>
    </location>
    <ligand>
        <name>UTP</name>
        <dbReference type="ChEBI" id="CHEBI:46398"/>
    </ligand>
</feature>
<feature type="binding site" evidence="1">
    <location>
        <position position="226"/>
    </location>
    <ligand>
        <name>substrate</name>
    </ligand>
</feature>
<feature type="binding site" evidence="2">
    <location>
        <position position="256"/>
    </location>
    <ligand>
        <name>UTP</name>
        <dbReference type="ChEBI" id="CHEBI:46398"/>
    </ligand>
</feature>
<feature type="binding site" evidence="2">
    <location>
        <position position="382"/>
    </location>
    <ligand>
        <name>UTP</name>
        <dbReference type="ChEBI" id="CHEBI:46398"/>
    </ligand>
</feature>
<feature type="binding site" evidence="1">
    <location>
        <position position="412"/>
    </location>
    <ligand>
        <name>substrate</name>
    </ligand>
</feature>
<organism>
    <name type="scientific">Dictyostelium discoideum</name>
    <name type="common">Social amoeba</name>
    <dbReference type="NCBI Taxonomy" id="44689"/>
    <lineage>
        <taxon>Eukaryota</taxon>
        <taxon>Amoebozoa</taxon>
        <taxon>Evosea</taxon>
        <taxon>Eumycetozoa</taxon>
        <taxon>Dictyostelia</taxon>
        <taxon>Dictyosteliales</taxon>
        <taxon>Dictyosteliaceae</taxon>
        <taxon>Dictyostelium</taxon>
    </lineage>
</organism>